<gene>
    <name evidence="1" type="primary">engB</name>
    <name type="ordered locus">Psyc_0259</name>
</gene>
<name>ENGB_PSYA2</name>
<accession>Q4FV29</accession>
<proteinExistence type="inferred from homology"/>
<protein>
    <recommendedName>
        <fullName evidence="1">Probable GTP-binding protein EngB</fullName>
    </recommendedName>
</protein>
<organism>
    <name type="scientific">Psychrobacter arcticus (strain DSM 17307 / VKM B-2377 / 273-4)</name>
    <dbReference type="NCBI Taxonomy" id="259536"/>
    <lineage>
        <taxon>Bacteria</taxon>
        <taxon>Pseudomonadati</taxon>
        <taxon>Pseudomonadota</taxon>
        <taxon>Gammaproteobacteria</taxon>
        <taxon>Moraxellales</taxon>
        <taxon>Moraxellaceae</taxon>
        <taxon>Psychrobacter</taxon>
    </lineage>
</organism>
<reference key="1">
    <citation type="journal article" date="2010" name="Appl. Environ. Microbiol.">
        <title>The genome sequence of Psychrobacter arcticus 273-4, a psychroactive Siberian permafrost bacterium, reveals mechanisms for adaptation to low-temperature growth.</title>
        <authorList>
            <person name="Ayala-del-Rio H.L."/>
            <person name="Chain P.S."/>
            <person name="Grzymski J.J."/>
            <person name="Ponder M.A."/>
            <person name="Ivanova N."/>
            <person name="Bergholz P.W."/>
            <person name="Di Bartolo G."/>
            <person name="Hauser L."/>
            <person name="Land M."/>
            <person name="Bakermans C."/>
            <person name="Rodrigues D."/>
            <person name="Klappenbach J."/>
            <person name="Zarka D."/>
            <person name="Larimer F."/>
            <person name="Richardson P."/>
            <person name="Murray A."/>
            <person name="Thomashow M."/>
            <person name="Tiedje J.M."/>
        </authorList>
    </citation>
    <scope>NUCLEOTIDE SEQUENCE [LARGE SCALE GENOMIC DNA]</scope>
    <source>
        <strain>DSM 17307 / VKM B-2377 / 273-4</strain>
    </source>
</reference>
<feature type="chain" id="PRO_0000269478" description="Probable GTP-binding protein EngB">
    <location>
        <begin position="1"/>
        <end position="232"/>
    </location>
</feature>
<feature type="domain" description="EngB-type G" evidence="1">
    <location>
        <begin position="13"/>
        <end position="188"/>
    </location>
</feature>
<feature type="binding site" evidence="1">
    <location>
        <begin position="21"/>
        <end position="28"/>
    </location>
    <ligand>
        <name>GTP</name>
        <dbReference type="ChEBI" id="CHEBI:37565"/>
    </ligand>
</feature>
<feature type="binding site" evidence="1">
    <location>
        <position position="28"/>
    </location>
    <ligand>
        <name>Mg(2+)</name>
        <dbReference type="ChEBI" id="CHEBI:18420"/>
    </ligand>
</feature>
<feature type="binding site" evidence="1">
    <location>
        <begin position="48"/>
        <end position="52"/>
    </location>
    <ligand>
        <name>GTP</name>
        <dbReference type="ChEBI" id="CHEBI:37565"/>
    </ligand>
</feature>
<feature type="binding site" evidence="1">
    <location>
        <position position="50"/>
    </location>
    <ligand>
        <name>Mg(2+)</name>
        <dbReference type="ChEBI" id="CHEBI:18420"/>
    </ligand>
</feature>
<feature type="binding site" evidence="1">
    <location>
        <begin position="67"/>
        <end position="70"/>
    </location>
    <ligand>
        <name>GTP</name>
        <dbReference type="ChEBI" id="CHEBI:37565"/>
    </ligand>
</feature>
<feature type="binding site" evidence="1">
    <location>
        <begin position="134"/>
        <end position="137"/>
    </location>
    <ligand>
        <name>GTP</name>
        <dbReference type="ChEBI" id="CHEBI:37565"/>
    </ligand>
</feature>
<feature type="binding site" evidence="1">
    <location>
        <begin position="167"/>
        <end position="169"/>
    </location>
    <ligand>
        <name>GTP</name>
        <dbReference type="ChEBI" id="CHEBI:37565"/>
    </ligand>
</feature>
<sequence>MSAPTFRLCPADIGLEVAFAGRSNAGKSSAINALTNQRQLARSSKTPGRTQMINFFNVGDADRRLVDLPGYGYAAVPLEMKKEWQVELEEYLVSRSSLAGLVLMTDIRHPLKFFDEQMLRWAKDGELPVHILLTKADKLKYGASKNALLNTRKRLKQLGLNCSIQLFSALRKEGLDELAGVMGNWYEYQLEANKIIESSFALLEGSELEDAIEKDAVQKDKNLKDSAQKESK</sequence>
<keyword id="KW-0131">Cell cycle</keyword>
<keyword id="KW-0132">Cell division</keyword>
<keyword id="KW-0342">GTP-binding</keyword>
<keyword id="KW-0460">Magnesium</keyword>
<keyword id="KW-0479">Metal-binding</keyword>
<keyword id="KW-0547">Nucleotide-binding</keyword>
<keyword id="KW-1185">Reference proteome</keyword>
<keyword id="KW-0717">Septation</keyword>
<evidence type="ECO:0000255" key="1">
    <source>
        <dbReference type="HAMAP-Rule" id="MF_00321"/>
    </source>
</evidence>
<evidence type="ECO:0000305" key="2"/>
<comment type="function">
    <text evidence="1">Necessary for normal cell division and for the maintenance of normal septation.</text>
</comment>
<comment type="cofactor">
    <cofactor evidence="1">
        <name>Mg(2+)</name>
        <dbReference type="ChEBI" id="CHEBI:18420"/>
    </cofactor>
</comment>
<comment type="similarity">
    <text evidence="1">Belongs to the TRAFAC class TrmE-Era-EngA-EngB-Septin-like GTPase superfamily. EngB GTPase family.</text>
</comment>
<comment type="sequence caution" evidence="2">
    <conflict type="erroneous initiation">
        <sequence resource="EMBL-CDS" id="AAZ18129"/>
    </conflict>
</comment>
<dbReference type="EMBL" id="CP000082">
    <property type="protein sequence ID" value="AAZ18129.1"/>
    <property type="status" value="ALT_INIT"/>
    <property type="molecule type" value="Genomic_DNA"/>
</dbReference>
<dbReference type="SMR" id="Q4FV29"/>
<dbReference type="STRING" id="259536.Psyc_0259"/>
<dbReference type="KEGG" id="par:Psyc_0259"/>
<dbReference type="eggNOG" id="COG0218">
    <property type="taxonomic scope" value="Bacteria"/>
</dbReference>
<dbReference type="HOGENOM" id="CLU_033732_1_0_6"/>
<dbReference type="Proteomes" id="UP000000546">
    <property type="component" value="Chromosome"/>
</dbReference>
<dbReference type="GO" id="GO:0005829">
    <property type="term" value="C:cytosol"/>
    <property type="evidence" value="ECO:0007669"/>
    <property type="project" value="TreeGrafter"/>
</dbReference>
<dbReference type="GO" id="GO:0005525">
    <property type="term" value="F:GTP binding"/>
    <property type="evidence" value="ECO:0007669"/>
    <property type="project" value="UniProtKB-UniRule"/>
</dbReference>
<dbReference type="GO" id="GO:0046872">
    <property type="term" value="F:metal ion binding"/>
    <property type="evidence" value="ECO:0007669"/>
    <property type="project" value="UniProtKB-KW"/>
</dbReference>
<dbReference type="GO" id="GO:0000917">
    <property type="term" value="P:division septum assembly"/>
    <property type="evidence" value="ECO:0007669"/>
    <property type="project" value="UniProtKB-KW"/>
</dbReference>
<dbReference type="CDD" id="cd01876">
    <property type="entry name" value="YihA_EngB"/>
    <property type="match status" value="1"/>
</dbReference>
<dbReference type="FunFam" id="3.40.50.300:FF:000098">
    <property type="entry name" value="Probable GTP-binding protein EngB"/>
    <property type="match status" value="1"/>
</dbReference>
<dbReference type="Gene3D" id="3.40.50.300">
    <property type="entry name" value="P-loop containing nucleotide triphosphate hydrolases"/>
    <property type="match status" value="1"/>
</dbReference>
<dbReference type="HAMAP" id="MF_00321">
    <property type="entry name" value="GTPase_EngB"/>
    <property type="match status" value="1"/>
</dbReference>
<dbReference type="InterPro" id="IPR030393">
    <property type="entry name" value="G_ENGB_dom"/>
</dbReference>
<dbReference type="InterPro" id="IPR006073">
    <property type="entry name" value="GTP-bd"/>
</dbReference>
<dbReference type="InterPro" id="IPR019987">
    <property type="entry name" value="GTP-bd_ribosome_bio_YsxC"/>
</dbReference>
<dbReference type="InterPro" id="IPR027417">
    <property type="entry name" value="P-loop_NTPase"/>
</dbReference>
<dbReference type="NCBIfam" id="TIGR03598">
    <property type="entry name" value="GTPase_YsxC"/>
    <property type="match status" value="1"/>
</dbReference>
<dbReference type="PANTHER" id="PTHR11649:SF13">
    <property type="entry name" value="ENGB-TYPE G DOMAIN-CONTAINING PROTEIN"/>
    <property type="match status" value="1"/>
</dbReference>
<dbReference type="PANTHER" id="PTHR11649">
    <property type="entry name" value="MSS1/TRME-RELATED GTP-BINDING PROTEIN"/>
    <property type="match status" value="1"/>
</dbReference>
<dbReference type="Pfam" id="PF01926">
    <property type="entry name" value="MMR_HSR1"/>
    <property type="match status" value="1"/>
</dbReference>
<dbReference type="SUPFAM" id="SSF52540">
    <property type="entry name" value="P-loop containing nucleoside triphosphate hydrolases"/>
    <property type="match status" value="1"/>
</dbReference>
<dbReference type="PROSITE" id="PS51706">
    <property type="entry name" value="G_ENGB"/>
    <property type="match status" value="1"/>
</dbReference>